<organism>
    <name type="scientific">Ruegeria sp. (strain TM1040)</name>
    <name type="common">Silicibacter sp.</name>
    <dbReference type="NCBI Taxonomy" id="292414"/>
    <lineage>
        <taxon>Bacteria</taxon>
        <taxon>Pseudomonadati</taxon>
        <taxon>Pseudomonadota</taxon>
        <taxon>Alphaproteobacteria</taxon>
        <taxon>Rhodobacterales</taxon>
        <taxon>Roseobacteraceae</taxon>
        <taxon>Ruegeria</taxon>
    </lineage>
</organism>
<feature type="chain" id="PRO_1000093556" description="Peptide chain release factor 2">
    <location>
        <begin position="1"/>
        <end position="374"/>
    </location>
</feature>
<feature type="modified residue" description="N5-methylglutamine" evidence="1">
    <location>
        <position position="249"/>
    </location>
</feature>
<dbReference type="EMBL" id="CP000377">
    <property type="protein sequence ID" value="ABF63601.1"/>
    <property type="molecule type" value="Genomic_DNA"/>
</dbReference>
<dbReference type="RefSeq" id="WP_011538213.1">
    <property type="nucleotide sequence ID" value="NC_008044.1"/>
</dbReference>
<dbReference type="SMR" id="Q1GIB5"/>
<dbReference type="STRING" id="292414.TM1040_0868"/>
<dbReference type="KEGG" id="sit:TM1040_0868"/>
<dbReference type="eggNOG" id="COG1186">
    <property type="taxonomic scope" value="Bacteria"/>
</dbReference>
<dbReference type="HOGENOM" id="CLU_036856_6_0_5"/>
<dbReference type="OrthoDB" id="9806673at2"/>
<dbReference type="Proteomes" id="UP000000636">
    <property type="component" value="Chromosome"/>
</dbReference>
<dbReference type="GO" id="GO:0005737">
    <property type="term" value="C:cytoplasm"/>
    <property type="evidence" value="ECO:0007669"/>
    <property type="project" value="UniProtKB-SubCell"/>
</dbReference>
<dbReference type="GO" id="GO:0016149">
    <property type="term" value="F:translation release factor activity, codon specific"/>
    <property type="evidence" value="ECO:0007669"/>
    <property type="project" value="UniProtKB-UniRule"/>
</dbReference>
<dbReference type="FunFam" id="3.30.160.20:FF:000010">
    <property type="entry name" value="Peptide chain release factor 2"/>
    <property type="match status" value="1"/>
</dbReference>
<dbReference type="Gene3D" id="3.30.160.20">
    <property type="match status" value="1"/>
</dbReference>
<dbReference type="Gene3D" id="3.30.70.1660">
    <property type="match status" value="1"/>
</dbReference>
<dbReference type="Gene3D" id="1.20.58.410">
    <property type="entry name" value="Release factor"/>
    <property type="match status" value="1"/>
</dbReference>
<dbReference type="HAMAP" id="MF_00094">
    <property type="entry name" value="Rel_fac_2"/>
    <property type="match status" value="1"/>
</dbReference>
<dbReference type="InterPro" id="IPR005139">
    <property type="entry name" value="PCRF"/>
</dbReference>
<dbReference type="InterPro" id="IPR000352">
    <property type="entry name" value="Pep_chain_release_fac_I"/>
</dbReference>
<dbReference type="InterPro" id="IPR045853">
    <property type="entry name" value="Pep_chain_release_fac_I_sf"/>
</dbReference>
<dbReference type="InterPro" id="IPR004374">
    <property type="entry name" value="PrfB"/>
</dbReference>
<dbReference type="NCBIfam" id="TIGR00020">
    <property type="entry name" value="prfB"/>
    <property type="match status" value="1"/>
</dbReference>
<dbReference type="PANTHER" id="PTHR43116:SF3">
    <property type="entry name" value="CLASS I PEPTIDE CHAIN RELEASE FACTOR"/>
    <property type="match status" value="1"/>
</dbReference>
<dbReference type="PANTHER" id="PTHR43116">
    <property type="entry name" value="PEPTIDE CHAIN RELEASE FACTOR 2"/>
    <property type="match status" value="1"/>
</dbReference>
<dbReference type="Pfam" id="PF03462">
    <property type="entry name" value="PCRF"/>
    <property type="match status" value="1"/>
</dbReference>
<dbReference type="Pfam" id="PF00472">
    <property type="entry name" value="RF-1"/>
    <property type="match status" value="1"/>
</dbReference>
<dbReference type="SMART" id="SM00937">
    <property type="entry name" value="PCRF"/>
    <property type="match status" value="1"/>
</dbReference>
<dbReference type="SUPFAM" id="SSF75620">
    <property type="entry name" value="Release factor"/>
    <property type="match status" value="1"/>
</dbReference>
<dbReference type="PROSITE" id="PS00745">
    <property type="entry name" value="RF_PROK_I"/>
    <property type="match status" value="1"/>
</dbReference>
<keyword id="KW-0963">Cytoplasm</keyword>
<keyword id="KW-0488">Methylation</keyword>
<keyword id="KW-0648">Protein biosynthesis</keyword>
<keyword id="KW-1185">Reference proteome</keyword>
<gene>
    <name evidence="1" type="primary">prfB</name>
    <name type="ordered locus">TM1040_0868</name>
</gene>
<proteinExistence type="inferred from homology"/>
<reference key="1">
    <citation type="submission" date="2006-05" db="EMBL/GenBank/DDBJ databases">
        <title>Complete sequence of chromosome of Silicibacter sp. TM1040.</title>
        <authorList>
            <consortium name="US DOE Joint Genome Institute"/>
            <person name="Copeland A."/>
            <person name="Lucas S."/>
            <person name="Lapidus A."/>
            <person name="Barry K."/>
            <person name="Detter J.C."/>
            <person name="Glavina del Rio T."/>
            <person name="Hammon N."/>
            <person name="Israni S."/>
            <person name="Dalin E."/>
            <person name="Tice H."/>
            <person name="Pitluck S."/>
            <person name="Brettin T."/>
            <person name="Bruce D."/>
            <person name="Han C."/>
            <person name="Tapia R."/>
            <person name="Goodwin L."/>
            <person name="Thompson L.S."/>
            <person name="Gilna P."/>
            <person name="Schmutz J."/>
            <person name="Larimer F."/>
            <person name="Land M."/>
            <person name="Hauser L."/>
            <person name="Kyrpides N."/>
            <person name="Kim E."/>
            <person name="Belas R."/>
            <person name="Moran M.A."/>
            <person name="Buchan A."/>
            <person name="Gonzalez J.M."/>
            <person name="Schell M.A."/>
            <person name="Sun F."/>
            <person name="Richardson P."/>
        </authorList>
    </citation>
    <scope>NUCLEOTIDE SEQUENCE [LARGE SCALE GENOMIC DNA]</scope>
    <source>
        <strain>TM1040</strain>
    </source>
</reference>
<name>RF2_RUEST</name>
<evidence type="ECO:0000255" key="1">
    <source>
        <dbReference type="HAMAP-Rule" id="MF_00094"/>
    </source>
</evidence>
<accession>Q1GIB5</accession>
<sequence>MRAEIQTIVADIEKSLDLLAQRMNWETAEFRLEEFNARVEDPNLWDDPAAAQKLMRDRQSLVDAMDTYKSIRQDLQDSVELIELGEMEEDAEVVKDAEDTLKALKEKAAQKELEALLDGETDPNDAFLEIKAGAGGTEACDWASMLARMYVRWAESRGFSVELQEEQAGAEAGIKSATYQIKGHNAYGWLKSESGTHRLVRISPFGKGTRETSFAAVGAYPVIDDNIEIEVNPADIRIDTYRSSGAGGQHVNTTDSAVRITHEPTGIVVTSSEKSQHQNRDIAMKALKSRLYQLELDRRNAEVNALHEAKGDAGWGNQIRSYVMQPYQMVKDLRTNHETADTKGVLDGDLDGFMAATLAMKVAGKSRADAQGED</sequence>
<comment type="function">
    <text evidence="1">Peptide chain release factor 2 directs the termination of translation in response to the peptide chain termination codons UGA and UAA.</text>
</comment>
<comment type="subcellular location">
    <subcellularLocation>
        <location evidence="1">Cytoplasm</location>
    </subcellularLocation>
</comment>
<comment type="PTM">
    <text evidence="1">Methylated by PrmC. Methylation increases the termination efficiency of RF2.</text>
</comment>
<comment type="similarity">
    <text evidence="1">Belongs to the prokaryotic/mitochondrial release factor family.</text>
</comment>
<protein>
    <recommendedName>
        <fullName evidence="1">Peptide chain release factor 2</fullName>
        <shortName evidence="1">RF-2</shortName>
    </recommendedName>
</protein>